<gene>
    <name evidence="1" type="primary">purM</name>
    <name type="ordered locus">Asuc_0729</name>
</gene>
<dbReference type="EC" id="6.3.3.1" evidence="1"/>
<dbReference type="EMBL" id="CP000746">
    <property type="protein sequence ID" value="ABR74101.1"/>
    <property type="molecule type" value="Genomic_DNA"/>
</dbReference>
<dbReference type="RefSeq" id="WP_012072480.1">
    <property type="nucleotide sequence ID" value="NC_009655.1"/>
</dbReference>
<dbReference type="SMR" id="A6VMA4"/>
<dbReference type="STRING" id="339671.Asuc_0729"/>
<dbReference type="KEGG" id="asu:Asuc_0729"/>
<dbReference type="eggNOG" id="COG0150">
    <property type="taxonomic scope" value="Bacteria"/>
</dbReference>
<dbReference type="HOGENOM" id="CLU_047116_0_0_6"/>
<dbReference type="OrthoDB" id="9777881at2"/>
<dbReference type="UniPathway" id="UPA00074">
    <property type="reaction ID" value="UER00129"/>
</dbReference>
<dbReference type="Proteomes" id="UP000001114">
    <property type="component" value="Chromosome"/>
</dbReference>
<dbReference type="GO" id="GO:0005829">
    <property type="term" value="C:cytosol"/>
    <property type="evidence" value="ECO:0007669"/>
    <property type="project" value="TreeGrafter"/>
</dbReference>
<dbReference type="GO" id="GO:0005524">
    <property type="term" value="F:ATP binding"/>
    <property type="evidence" value="ECO:0007669"/>
    <property type="project" value="UniProtKB-KW"/>
</dbReference>
<dbReference type="GO" id="GO:0004637">
    <property type="term" value="F:phosphoribosylamine-glycine ligase activity"/>
    <property type="evidence" value="ECO:0007669"/>
    <property type="project" value="TreeGrafter"/>
</dbReference>
<dbReference type="GO" id="GO:0004641">
    <property type="term" value="F:phosphoribosylformylglycinamidine cyclo-ligase activity"/>
    <property type="evidence" value="ECO:0007669"/>
    <property type="project" value="UniProtKB-UniRule"/>
</dbReference>
<dbReference type="GO" id="GO:0006189">
    <property type="term" value="P:'de novo' IMP biosynthetic process"/>
    <property type="evidence" value="ECO:0007669"/>
    <property type="project" value="UniProtKB-UniRule"/>
</dbReference>
<dbReference type="GO" id="GO:0046084">
    <property type="term" value="P:adenine biosynthetic process"/>
    <property type="evidence" value="ECO:0007669"/>
    <property type="project" value="TreeGrafter"/>
</dbReference>
<dbReference type="CDD" id="cd02196">
    <property type="entry name" value="PurM"/>
    <property type="match status" value="1"/>
</dbReference>
<dbReference type="FunFam" id="3.30.1330.10:FF:000001">
    <property type="entry name" value="Phosphoribosylformylglycinamidine cyclo-ligase"/>
    <property type="match status" value="1"/>
</dbReference>
<dbReference type="FunFam" id="3.90.650.10:FF:000001">
    <property type="entry name" value="Phosphoribosylformylglycinamidine cyclo-ligase"/>
    <property type="match status" value="1"/>
</dbReference>
<dbReference type="Gene3D" id="3.90.650.10">
    <property type="entry name" value="PurM-like C-terminal domain"/>
    <property type="match status" value="1"/>
</dbReference>
<dbReference type="Gene3D" id="3.30.1330.10">
    <property type="entry name" value="PurM-like, N-terminal domain"/>
    <property type="match status" value="1"/>
</dbReference>
<dbReference type="HAMAP" id="MF_00741">
    <property type="entry name" value="AIRS"/>
    <property type="match status" value="1"/>
</dbReference>
<dbReference type="InterPro" id="IPR010918">
    <property type="entry name" value="PurM-like_C_dom"/>
</dbReference>
<dbReference type="InterPro" id="IPR036676">
    <property type="entry name" value="PurM-like_C_sf"/>
</dbReference>
<dbReference type="InterPro" id="IPR016188">
    <property type="entry name" value="PurM-like_N"/>
</dbReference>
<dbReference type="InterPro" id="IPR036921">
    <property type="entry name" value="PurM-like_N_sf"/>
</dbReference>
<dbReference type="InterPro" id="IPR004733">
    <property type="entry name" value="PurM_cligase"/>
</dbReference>
<dbReference type="NCBIfam" id="TIGR00878">
    <property type="entry name" value="purM"/>
    <property type="match status" value="1"/>
</dbReference>
<dbReference type="PANTHER" id="PTHR10520:SF12">
    <property type="entry name" value="TRIFUNCTIONAL PURINE BIOSYNTHETIC PROTEIN ADENOSINE-3"/>
    <property type="match status" value="1"/>
</dbReference>
<dbReference type="PANTHER" id="PTHR10520">
    <property type="entry name" value="TRIFUNCTIONAL PURINE BIOSYNTHETIC PROTEIN ADENOSINE-3-RELATED"/>
    <property type="match status" value="1"/>
</dbReference>
<dbReference type="Pfam" id="PF00586">
    <property type="entry name" value="AIRS"/>
    <property type="match status" value="1"/>
</dbReference>
<dbReference type="Pfam" id="PF02769">
    <property type="entry name" value="AIRS_C"/>
    <property type="match status" value="1"/>
</dbReference>
<dbReference type="SUPFAM" id="SSF56042">
    <property type="entry name" value="PurM C-terminal domain-like"/>
    <property type="match status" value="1"/>
</dbReference>
<dbReference type="SUPFAM" id="SSF55326">
    <property type="entry name" value="PurM N-terminal domain-like"/>
    <property type="match status" value="1"/>
</dbReference>
<sequence length="345" mass="36953">MSKQSLSYKDAGVDINAGNELVERIKPHVKRTTRSEVIGGLGGFGALCALPAKYKEPVLVSGTDGVGTKLRLAIDLKKHDTIGIDLVAMCVNDLVVQGAEPLFFLDYYATGKLDVDVAADVVKGIAEGCVQSSCALVGGETAEMPGMYREGDYDLAGFCVGVVEKSKILDGSKVQAGDALIALASSGPHSNGYSLVRKVIEVAGVNPATEQLAGKPLAEQVLAPTKIYVKSVLELIEKTDVHAIAHLTGGGFWENIPRVLPENVKAVIDETSWDWQPVFKWLQEQGNITRHEMYRTFNCGVGMVLALPQAEADKALDILRAAGENAWLIGRIEALNAGEQQVIIR</sequence>
<organism>
    <name type="scientific">Actinobacillus succinogenes (strain ATCC 55618 / DSM 22257 / CCUG 43843 / 130Z)</name>
    <dbReference type="NCBI Taxonomy" id="339671"/>
    <lineage>
        <taxon>Bacteria</taxon>
        <taxon>Pseudomonadati</taxon>
        <taxon>Pseudomonadota</taxon>
        <taxon>Gammaproteobacteria</taxon>
        <taxon>Pasteurellales</taxon>
        <taxon>Pasteurellaceae</taxon>
        <taxon>Actinobacillus</taxon>
    </lineage>
</organism>
<proteinExistence type="inferred from homology"/>
<keyword id="KW-0067">ATP-binding</keyword>
<keyword id="KW-0963">Cytoplasm</keyword>
<keyword id="KW-0436">Ligase</keyword>
<keyword id="KW-0547">Nucleotide-binding</keyword>
<keyword id="KW-0658">Purine biosynthesis</keyword>
<keyword id="KW-1185">Reference proteome</keyword>
<protein>
    <recommendedName>
        <fullName evidence="1">Phosphoribosylformylglycinamidine cyclo-ligase</fullName>
        <ecNumber evidence="1">6.3.3.1</ecNumber>
    </recommendedName>
    <alternativeName>
        <fullName evidence="1">AIR synthase</fullName>
    </alternativeName>
    <alternativeName>
        <fullName evidence="1">AIRS</fullName>
    </alternativeName>
    <alternativeName>
        <fullName evidence="1">Phosphoribosyl-aminoimidazole synthetase</fullName>
    </alternativeName>
</protein>
<evidence type="ECO:0000255" key="1">
    <source>
        <dbReference type="HAMAP-Rule" id="MF_00741"/>
    </source>
</evidence>
<reference key="1">
    <citation type="journal article" date="2010" name="BMC Genomics">
        <title>A genomic perspective on the potential of Actinobacillus succinogenes for industrial succinate production.</title>
        <authorList>
            <person name="McKinlay J.B."/>
            <person name="Laivenieks M."/>
            <person name="Schindler B.D."/>
            <person name="McKinlay A.A."/>
            <person name="Siddaramappa S."/>
            <person name="Challacombe J.F."/>
            <person name="Lowry S.R."/>
            <person name="Clum A."/>
            <person name="Lapidus A.L."/>
            <person name="Burkhart K.B."/>
            <person name="Harkins V."/>
            <person name="Vieille C."/>
        </authorList>
    </citation>
    <scope>NUCLEOTIDE SEQUENCE [LARGE SCALE GENOMIC DNA]</scope>
    <source>
        <strain>ATCC 55618 / DSM 22257 / CCUG 43843 / 130Z</strain>
    </source>
</reference>
<comment type="catalytic activity">
    <reaction evidence="1">
        <text>2-formamido-N(1)-(5-O-phospho-beta-D-ribosyl)acetamidine + ATP = 5-amino-1-(5-phospho-beta-D-ribosyl)imidazole + ADP + phosphate + H(+)</text>
        <dbReference type="Rhea" id="RHEA:23032"/>
        <dbReference type="ChEBI" id="CHEBI:15378"/>
        <dbReference type="ChEBI" id="CHEBI:30616"/>
        <dbReference type="ChEBI" id="CHEBI:43474"/>
        <dbReference type="ChEBI" id="CHEBI:137981"/>
        <dbReference type="ChEBI" id="CHEBI:147287"/>
        <dbReference type="ChEBI" id="CHEBI:456216"/>
        <dbReference type="EC" id="6.3.3.1"/>
    </reaction>
</comment>
<comment type="pathway">
    <text evidence="1">Purine metabolism; IMP biosynthesis via de novo pathway; 5-amino-1-(5-phospho-D-ribosyl)imidazole from N(2)-formyl-N(1)-(5-phospho-D-ribosyl)glycinamide: step 2/2.</text>
</comment>
<comment type="subcellular location">
    <subcellularLocation>
        <location evidence="1">Cytoplasm</location>
    </subcellularLocation>
</comment>
<comment type="similarity">
    <text evidence="1">Belongs to the AIR synthase family.</text>
</comment>
<feature type="chain" id="PRO_1000072813" description="Phosphoribosylformylglycinamidine cyclo-ligase">
    <location>
        <begin position="1"/>
        <end position="345"/>
    </location>
</feature>
<accession>A6VMA4</accession>
<name>PUR5_ACTSZ</name>